<protein>
    <recommendedName>
        <fullName>Uricase</fullName>
        <ecNumber>1.7.3.3</ecNumber>
    </recommendedName>
    <alternativeName>
        <fullName>Urate oxidase</fullName>
    </alternativeName>
</protein>
<gene>
    <name type="primary">UOX</name>
</gene>
<comment type="function">
    <text>Catalyzes the oxidation of uric acid to 5-hydroxyisourate, which is further processed to form (S)-allantoin.</text>
</comment>
<comment type="catalytic activity">
    <reaction>
        <text>urate + O2 + H2O = 5-hydroxyisourate + H2O2</text>
        <dbReference type="Rhea" id="RHEA:21368"/>
        <dbReference type="ChEBI" id="CHEBI:15377"/>
        <dbReference type="ChEBI" id="CHEBI:15379"/>
        <dbReference type="ChEBI" id="CHEBI:16240"/>
        <dbReference type="ChEBI" id="CHEBI:17775"/>
        <dbReference type="ChEBI" id="CHEBI:18072"/>
        <dbReference type="EC" id="1.7.3.3"/>
    </reaction>
</comment>
<comment type="pathway">
    <text>Purine metabolism; urate degradation; (S)-allantoin from urate: step 1/3.</text>
</comment>
<comment type="subcellular location">
    <subcellularLocation>
        <location>Peroxisome</location>
    </subcellularLocation>
</comment>
<comment type="similarity">
    <text evidence="5">Belongs to the uricase family.</text>
</comment>
<organism>
    <name type="scientific">Macaca fascicularis</name>
    <name type="common">Crab-eating macaque</name>
    <name type="synonym">Cynomolgus monkey</name>
    <dbReference type="NCBI Taxonomy" id="9541"/>
    <lineage>
        <taxon>Eukaryota</taxon>
        <taxon>Metazoa</taxon>
        <taxon>Chordata</taxon>
        <taxon>Craniata</taxon>
        <taxon>Vertebrata</taxon>
        <taxon>Euteleostomi</taxon>
        <taxon>Mammalia</taxon>
        <taxon>Eutheria</taxon>
        <taxon>Euarchontoglires</taxon>
        <taxon>Primates</taxon>
        <taxon>Haplorrhini</taxon>
        <taxon>Catarrhini</taxon>
        <taxon>Cercopithecidae</taxon>
        <taxon>Cercopithecinae</taxon>
        <taxon>Macaca</taxon>
    </lineage>
</organism>
<evidence type="ECO:0000250" key="1">
    <source>
        <dbReference type="UniProtKB" id="D0VWQ1"/>
    </source>
</evidence>
<evidence type="ECO:0000250" key="2">
    <source>
        <dbReference type="UniProtKB" id="P25688"/>
    </source>
</evidence>
<evidence type="ECO:0000250" key="3">
    <source>
        <dbReference type="UniProtKB" id="Q00511"/>
    </source>
</evidence>
<evidence type="ECO:0000255" key="4"/>
<evidence type="ECO:0000305" key="5"/>
<keyword id="KW-0007">Acetylation</keyword>
<keyword id="KW-0560">Oxidoreductase</keyword>
<keyword id="KW-0576">Peroxisome</keyword>
<keyword id="KW-0597">Phosphoprotein</keyword>
<keyword id="KW-0659">Purine metabolism</keyword>
<keyword id="KW-1185">Reference proteome</keyword>
<name>URIC_MACFA</name>
<dbReference type="EC" id="1.7.3.3"/>
<dbReference type="EMBL" id="AB074382">
    <property type="protein sequence ID" value="BAB91556.1"/>
    <property type="molecule type" value="Genomic_DNA"/>
</dbReference>
<dbReference type="RefSeq" id="XP_005542943.1">
    <property type="nucleotide sequence ID" value="XM_005542886.1"/>
</dbReference>
<dbReference type="SMR" id="Q8MHW6"/>
<dbReference type="STRING" id="9541.ENSMFAP00000046081"/>
<dbReference type="GeneID" id="102117077"/>
<dbReference type="KEGG" id="mcf:102117077"/>
<dbReference type="eggNOG" id="KOG1599">
    <property type="taxonomic scope" value="Eukaryota"/>
</dbReference>
<dbReference type="UniPathway" id="UPA00394">
    <property type="reaction ID" value="UER00650"/>
</dbReference>
<dbReference type="Proteomes" id="UP000233100">
    <property type="component" value="Unplaced"/>
</dbReference>
<dbReference type="GO" id="GO:0005777">
    <property type="term" value="C:peroxisome"/>
    <property type="evidence" value="ECO:0007669"/>
    <property type="project" value="UniProtKB-SubCell"/>
</dbReference>
<dbReference type="GO" id="GO:0004846">
    <property type="term" value="F:urate oxidase activity"/>
    <property type="evidence" value="ECO:0007669"/>
    <property type="project" value="UniProtKB-EC"/>
</dbReference>
<dbReference type="GO" id="GO:0006145">
    <property type="term" value="P:purine nucleobase catabolic process"/>
    <property type="evidence" value="ECO:0007669"/>
    <property type="project" value="TreeGrafter"/>
</dbReference>
<dbReference type="GO" id="GO:0019628">
    <property type="term" value="P:urate catabolic process"/>
    <property type="evidence" value="ECO:0007669"/>
    <property type="project" value="UniProtKB-UniPathway"/>
</dbReference>
<dbReference type="CDD" id="cd00445">
    <property type="entry name" value="Uricase"/>
    <property type="match status" value="1"/>
</dbReference>
<dbReference type="FunFam" id="3.10.270.10:FF:000001">
    <property type="entry name" value="Uricase"/>
    <property type="match status" value="1"/>
</dbReference>
<dbReference type="Gene3D" id="3.10.270.10">
    <property type="entry name" value="Urate Oxidase"/>
    <property type="match status" value="1"/>
</dbReference>
<dbReference type="InterPro" id="IPR002042">
    <property type="entry name" value="Uricase"/>
</dbReference>
<dbReference type="InterPro" id="IPR019842">
    <property type="entry name" value="Uricase_CS"/>
</dbReference>
<dbReference type="NCBIfam" id="TIGR03383">
    <property type="entry name" value="urate_oxi"/>
    <property type="match status" value="1"/>
</dbReference>
<dbReference type="PANTHER" id="PTHR42874">
    <property type="entry name" value="URICASE"/>
    <property type="match status" value="1"/>
</dbReference>
<dbReference type="PANTHER" id="PTHR42874:SF1">
    <property type="entry name" value="URICASE"/>
    <property type="match status" value="1"/>
</dbReference>
<dbReference type="Pfam" id="PF01014">
    <property type="entry name" value="Uricase"/>
    <property type="match status" value="2"/>
</dbReference>
<dbReference type="PIRSF" id="PIRSF000241">
    <property type="entry name" value="Urate_oxidase"/>
    <property type="match status" value="1"/>
</dbReference>
<dbReference type="PRINTS" id="PR00093">
    <property type="entry name" value="URICASE"/>
</dbReference>
<dbReference type="SUPFAM" id="SSF55620">
    <property type="entry name" value="Tetrahydrobiopterin biosynthesis enzymes-like"/>
    <property type="match status" value="2"/>
</dbReference>
<dbReference type="PROSITE" id="PS00366">
    <property type="entry name" value="URICASE"/>
    <property type="match status" value="1"/>
</dbReference>
<accession>Q8MHW6</accession>
<feature type="initiator methionine" description="Removed" evidence="2">
    <location>
        <position position="1"/>
    </location>
</feature>
<feature type="chain" id="PRO_0000165984" description="Uricase">
    <location>
        <begin position="2"/>
        <end position="304"/>
    </location>
</feature>
<feature type="short sequence motif" description="Microbody targeting signal" evidence="4">
    <location>
        <begin position="302"/>
        <end position="304"/>
    </location>
</feature>
<feature type="active site" description="Charge relay system" evidence="1">
    <location>
        <position position="23"/>
    </location>
</feature>
<feature type="active site" description="Charge relay system" evidence="1">
    <location>
        <position position="68"/>
    </location>
</feature>
<feature type="active site" description="Charge relay system" evidence="1">
    <location>
        <position position="264"/>
    </location>
</feature>
<feature type="binding site" evidence="3">
    <location>
        <position position="68"/>
    </location>
    <ligand>
        <name>urate</name>
        <dbReference type="ChEBI" id="CHEBI:17775"/>
    </ligand>
</feature>
<feature type="binding site" evidence="3">
    <location>
        <position position="69"/>
    </location>
    <ligand>
        <name>urate</name>
        <dbReference type="ChEBI" id="CHEBI:17775"/>
    </ligand>
</feature>
<feature type="binding site" evidence="3">
    <location>
        <position position="170"/>
    </location>
    <ligand>
        <name>urate</name>
        <dbReference type="ChEBI" id="CHEBI:17775"/>
    </ligand>
</feature>
<feature type="binding site" evidence="3">
    <location>
        <position position="187"/>
    </location>
    <ligand>
        <name>urate</name>
        <dbReference type="ChEBI" id="CHEBI:17775"/>
    </ligand>
</feature>
<feature type="binding site" evidence="3">
    <location>
        <position position="235"/>
    </location>
    <ligand>
        <name>urate</name>
        <dbReference type="ChEBI" id="CHEBI:17775"/>
    </ligand>
</feature>
<feature type="binding site" evidence="3">
    <location>
        <position position="236"/>
    </location>
    <ligand>
        <name>urate</name>
        <dbReference type="ChEBI" id="CHEBI:17775"/>
    </ligand>
</feature>
<feature type="binding site" evidence="3">
    <location>
        <position position="262"/>
    </location>
    <ligand>
        <name>urate</name>
        <dbReference type="ChEBI" id="CHEBI:17775"/>
    </ligand>
</feature>
<feature type="modified residue" description="N-acetylalanine" evidence="2">
    <location>
        <position position="2"/>
    </location>
</feature>
<feature type="modified residue" description="N6-acetyllysine; alternate" evidence="2">
    <location>
        <position position="10"/>
    </location>
</feature>
<feature type="modified residue" description="N6-succinyllysine; alternate" evidence="2">
    <location>
        <position position="10"/>
    </location>
</feature>
<feature type="modified residue" description="N6-acetyllysine; alternate" evidence="2">
    <location>
        <position position="23"/>
    </location>
</feature>
<feature type="modified residue" description="N6-succinyllysine; alternate" evidence="2">
    <location>
        <position position="23"/>
    </location>
</feature>
<feature type="modified residue" description="N6-acetyllysine" evidence="2">
    <location>
        <position position="27"/>
    </location>
</feature>
<feature type="modified residue" description="N6-acetyllysine" evidence="2">
    <location>
        <position position="36"/>
    </location>
</feature>
<feature type="modified residue" description="Phosphoserine" evidence="2">
    <location>
        <position position="39"/>
    </location>
</feature>
<feature type="modified residue" description="Phosphoserine" evidence="2">
    <location>
        <position position="63"/>
    </location>
</feature>
<feature type="modified residue" description="N6-acetyllysine" evidence="2">
    <location>
        <position position="118"/>
    </location>
</feature>
<feature type="modified residue" description="N6-acetyllysine" evidence="2">
    <location>
        <position position="122"/>
    </location>
</feature>
<feature type="modified residue" description="N6-acetyllysine" evidence="2">
    <location>
        <position position="164"/>
    </location>
</feature>
<feature type="modified residue" description="N6-acetyllysine" evidence="2">
    <location>
        <position position="175"/>
    </location>
</feature>
<feature type="modified residue" description="N6-acetyllysine" evidence="2">
    <location>
        <position position="185"/>
    </location>
</feature>
<feature type="modified residue" description="N6-acetyllysine; alternate" evidence="2">
    <location>
        <position position="221"/>
    </location>
</feature>
<feature type="modified residue" description="N6-succinyllysine; alternate" evidence="2">
    <location>
        <position position="221"/>
    </location>
</feature>
<feature type="modified residue" description="N6-acetyllysine; alternate" evidence="2">
    <location>
        <position position="228"/>
    </location>
</feature>
<feature type="modified residue" description="N6-succinyllysine; alternate" evidence="2">
    <location>
        <position position="228"/>
    </location>
</feature>
<feature type="modified residue" description="Phosphoserine" evidence="2">
    <location>
        <position position="232"/>
    </location>
</feature>
<feature type="modified residue" description="N6-acetyllysine" evidence="2">
    <location>
        <position position="278"/>
    </location>
</feature>
<feature type="modified residue" description="Phosphotyrosine" evidence="2">
    <location>
        <position position="289"/>
    </location>
</feature>
<reference key="1">
    <citation type="journal article" date="2002" name="Mol. Biol. Evol.">
        <title>Loss of urate oxidase activity in hominoids and its evolutionary implications.</title>
        <authorList>
            <person name="Oda M."/>
            <person name="Satta Y."/>
            <person name="Takenaka O."/>
            <person name="Takahata N."/>
        </authorList>
    </citation>
    <scope>NUCLEOTIDE SEQUENCE [GENOMIC DNA]</scope>
    <source>
        <tissue>Liver</tissue>
    </source>
</reference>
<sequence length="304" mass="34978">MADYHNNYKKNDELEFVRTGYGKDMVKVLHIQRDGKYHSIKEVATSVQLTLSSKKDYLHGDNSDIIPTDTIKNTVHVLAKFKGIKSIEAFGVNICEYFLSSFNHVIRAQVYVEEIPWKRLEKNGVKHVHAFIHTPTGTHFCEVEQLRSGPPVIHSGIKDLKVLKTTQSGFEGFIKDQFTTLPEVKDRCFATQVYCKWRYHQCRDVDFEATWGTIRDLVLEKFAGPYDKGEYSPSVQKTLYDIQVLSLSRVPEIEDMEISLPNIHYFNIDMSKMGLINKEEVLLPLDNPYGKITGTVKRKLSSRL</sequence>
<proteinExistence type="inferred from homology"/>